<gene>
    <name evidence="1" type="primary">bioB</name>
    <name type="ordered locus">FP0234</name>
</gene>
<protein>
    <recommendedName>
        <fullName evidence="1">Biotin synthase</fullName>
        <ecNumber evidence="1">2.8.1.6</ecNumber>
    </recommendedName>
</protein>
<keyword id="KW-0001">2Fe-2S</keyword>
<keyword id="KW-0004">4Fe-4S</keyword>
<keyword id="KW-0093">Biotin biosynthesis</keyword>
<keyword id="KW-0408">Iron</keyword>
<keyword id="KW-0411">Iron-sulfur</keyword>
<keyword id="KW-0479">Metal-binding</keyword>
<keyword id="KW-1185">Reference proteome</keyword>
<keyword id="KW-0949">S-adenosyl-L-methionine</keyword>
<keyword id="KW-0808">Transferase</keyword>
<reference key="1">
    <citation type="journal article" date="2007" name="Nat. Biotechnol.">
        <title>Complete genome sequence of the fish pathogen Flavobacterium psychrophilum.</title>
        <authorList>
            <person name="Duchaud E."/>
            <person name="Boussaha M."/>
            <person name="Loux V."/>
            <person name="Bernardet J.-F."/>
            <person name="Michel C."/>
            <person name="Kerouault B."/>
            <person name="Mondot S."/>
            <person name="Nicolas P."/>
            <person name="Bossy R."/>
            <person name="Caron C."/>
            <person name="Bessieres P."/>
            <person name="Gibrat J.-F."/>
            <person name="Claverol S."/>
            <person name="Dumetz F."/>
            <person name="Le Henaff M."/>
            <person name="Benmansour A."/>
        </authorList>
    </citation>
    <scope>NUCLEOTIDE SEQUENCE [LARGE SCALE GENOMIC DNA]</scope>
    <source>
        <strain>ATCC 49511 / DSM 21280 / CIP 103535 / JIP02/86</strain>
    </source>
</reference>
<feature type="chain" id="PRO_0000381385" description="Biotin synthase">
    <location>
        <begin position="1"/>
        <end position="362"/>
    </location>
</feature>
<feature type="domain" description="Radical SAM core" evidence="2">
    <location>
        <begin position="39"/>
        <end position="267"/>
    </location>
</feature>
<feature type="region of interest" description="Disordered" evidence="3">
    <location>
        <begin position="317"/>
        <end position="362"/>
    </location>
</feature>
<feature type="compositionally biased region" description="Basic and acidic residues" evidence="3">
    <location>
        <begin position="328"/>
        <end position="354"/>
    </location>
</feature>
<feature type="binding site" evidence="1">
    <location>
        <position position="54"/>
    </location>
    <ligand>
        <name>[4Fe-4S] cluster</name>
        <dbReference type="ChEBI" id="CHEBI:49883"/>
        <note>4Fe-4S-S-AdoMet</note>
    </ligand>
</feature>
<feature type="binding site" evidence="1">
    <location>
        <position position="58"/>
    </location>
    <ligand>
        <name>[4Fe-4S] cluster</name>
        <dbReference type="ChEBI" id="CHEBI:49883"/>
        <note>4Fe-4S-S-AdoMet</note>
    </ligand>
</feature>
<feature type="binding site" evidence="1">
    <location>
        <position position="61"/>
    </location>
    <ligand>
        <name>[4Fe-4S] cluster</name>
        <dbReference type="ChEBI" id="CHEBI:49883"/>
        <note>4Fe-4S-S-AdoMet</note>
    </ligand>
</feature>
<feature type="binding site" evidence="1">
    <location>
        <position position="98"/>
    </location>
    <ligand>
        <name>[2Fe-2S] cluster</name>
        <dbReference type="ChEBI" id="CHEBI:190135"/>
    </ligand>
</feature>
<feature type="binding site" evidence="1">
    <location>
        <position position="130"/>
    </location>
    <ligand>
        <name>[2Fe-2S] cluster</name>
        <dbReference type="ChEBI" id="CHEBI:190135"/>
    </ligand>
</feature>
<feature type="binding site" evidence="1">
    <location>
        <position position="190"/>
    </location>
    <ligand>
        <name>[2Fe-2S] cluster</name>
        <dbReference type="ChEBI" id="CHEBI:190135"/>
    </ligand>
</feature>
<feature type="binding site" evidence="1">
    <location>
        <position position="262"/>
    </location>
    <ligand>
        <name>[2Fe-2S] cluster</name>
        <dbReference type="ChEBI" id="CHEBI:190135"/>
    </ligand>
</feature>
<proteinExistence type="inferred from homology"/>
<dbReference type="EC" id="2.8.1.6" evidence="1"/>
<dbReference type="EMBL" id="AM398681">
    <property type="protein sequence ID" value="CAL42350.1"/>
    <property type="molecule type" value="Genomic_DNA"/>
</dbReference>
<dbReference type="RefSeq" id="WP_011962410.1">
    <property type="nucleotide sequence ID" value="NC_009613.3"/>
</dbReference>
<dbReference type="RefSeq" id="YP_001295170.1">
    <property type="nucleotide sequence ID" value="NC_009613.3"/>
</dbReference>
<dbReference type="SMR" id="A6GW77"/>
<dbReference type="STRING" id="402612.FP0234"/>
<dbReference type="EnsemblBacteria" id="CAL42350">
    <property type="protein sequence ID" value="CAL42350"/>
    <property type="gene ID" value="FP0234"/>
</dbReference>
<dbReference type="GeneID" id="66553862"/>
<dbReference type="KEGG" id="fps:FP0234"/>
<dbReference type="PATRIC" id="fig|402612.5.peg.243"/>
<dbReference type="eggNOG" id="COG0502">
    <property type="taxonomic scope" value="Bacteria"/>
</dbReference>
<dbReference type="HOGENOM" id="CLU_033172_1_1_10"/>
<dbReference type="OrthoDB" id="9786826at2"/>
<dbReference type="UniPathway" id="UPA00078">
    <property type="reaction ID" value="UER00162"/>
</dbReference>
<dbReference type="Proteomes" id="UP000006394">
    <property type="component" value="Chromosome"/>
</dbReference>
<dbReference type="GO" id="GO:0051537">
    <property type="term" value="F:2 iron, 2 sulfur cluster binding"/>
    <property type="evidence" value="ECO:0007669"/>
    <property type="project" value="UniProtKB-KW"/>
</dbReference>
<dbReference type="GO" id="GO:0051539">
    <property type="term" value="F:4 iron, 4 sulfur cluster binding"/>
    <property type="evidence" value="ECO:0007669"/>
    <property type="project" value="UniProtKB-KW"/>
</dbReference>
<dbReference type="GO" id="GO:0004076">
    <property type="term" value="F:biotin synthase activity"/>
    <property type="evidence" value="ECO:0007669"/>
    <property type="project" value="UniProtKB-UniRule"/>
</dbReference>
<dbReference type="GO" id="GO:0005506">
    <property type="term" value="F:iron ion binding"/>
    <property type="evidence" value="ECO:0007669"/>
    <property type="project" value="UniProtKB-UniRule"/>
</dbReference>
<dbReference type="GO" id="GO:0009102">
    <property type="term" value="P:biotin biosynthetic process"/>
    <property type="evidence" value="ECO:0007669"/>
    <property type="project" value="UniProtKB-UniRule"/>
</dbReference>
<dbReference type="CDD" id="cd01335">
    <property type="entry name" value="Radical_SAM"/>
    <property type="match status" value="1"/>
</dbReference>
<dbReference type="FunFam" id="3.20.20.70:FF:000011">
    <property type="entry name" value="Biotin synthase"/>
    <property type="match status" value="1"/>
</dbReference>
<dbReference type="Gene3D" id="3.20.20.70">
    <property type="entry name" value="Aldolase class I"/>
    <property type="match status" value="1"/>
</dbReference>
<dbReference type="HAMAP" id="MF_01694">
    <property type="entry name" value="BioB"/>
    <property type="match status" value="1"/>
</dbReference>
<dbReference type="InterPro" id="IPR013785">
    <property type="entry name" value="Aldolase_TIM"/>
</dbReference>
<dbReference type="InterPro" id="IPR010722">
    <property type="entry name" value="BATS_dom"/>
</dbReference>
<dbReference type="InterPro" id="IPR002684">
    <property type="entry name" value="Biotin_synth/BioAB"/>
</dbReference>
<dbReference type="InterPro" id="IPR024177">
    <property type="entry name" value="Biotin_synthase"/>
</dbReference>
<dbReference type="InterPro" id="IPR006638">
    <property type="entry name" value="Elp3/MiaA/NifB-like_rSAM"/>
</dbReference>
<dbReference type="InterPro" id="IPR007197">
    <property type="entry name" value="rSAM"/>
</dbReference>
<dbReference type="NCBIfam" id="TIGR00433">
    <property type="entry name" value="bioB"/>
    <property type="match status" value="1"/>
</dbReference>
<dbReference type="PANTHER" id="PTHR22976">
    <property type="entry name" value="BIOTIN SYNTHASE"/>
    <property type="match status" value="1"/>
</dbReference>
<dbReference type="PANTHER" id="PTHR22976:SF2">
    <property type="entry name" value="BIOTIN SYNTHASE, MITOCHONDRIAL"/>
    <property type="match status" value="1"/>
</dbReference>
<dbReference type="Pfam" id="PF06968">
    <property type="entry name" value="BATS"/>
    <property type="match status" value="1"/>
</dbReference>
<dbReference type="Pfam" id="PF04055">
    <property type="entry name" value="Radical_SAM"/>
    <property type="match status" value="1"/>
</dbReference>
<dbReference type="PIRSF" id="PIRSF001619">
    <property type="entry name" value="Biotin_synth"/>
    <property type="match status" value="1"/>
</dbReference>
<dbReference type="SFLD" id="SFLDG01060">
    <property type="entry name" value="BATS_domain_containing"/>
    <property type="match status" value="1"/>
</dbReference>
<dbReference type="SFLD" id="SFLDF00272">
    <property type="entry name" value="biotin_synthase"/>
    <property type="match status" value="1"/>
</dbReference>
<dbReference type="SMART" id="SM00876">
    <property type="entry name" value="BATS"/>
    <property type="match status" value="1"/>
</dbReference>
<dbReference type="SMART" id="SM00729">
    <property type="entry name" value="Elp3"/>
    <property type="match status" value="1"/>
</dbReference>
<dbReference type="SUPFAM" id="SSF102114">
    <property type="entry name" value="Radical SAM enzymes"/>
    <property type="match status" value="1"/>
</dbReference>
<dbReference type="PROSITE" id="PS51918">
    <property type="entry name" value="RADICAL_SAM"/>
    <property type="match status" value="1"/>
</dbReference>
<sequence length="362" mass="40257">MSVMRNNWTKEEIIAIYNKPLMDLLYEAASIHREYHDPNVVQVSTLLSIKTGGCPEDCGYCPQAARYHTDIEGNDLMSVQQVKAQALRAKSSGSSRVCMGAAWRNVKDGPEFDQVLEMVRTINKLDMEVCCTLGMITENQAHRLAEAGLYAYNHNLDTSEEYYKEVISTRGFEDRIETIANVRKTNVTVCSGGIIGMGESIGDRAGMLVALSTLSPQPESVPINALVAVEGTPMEEEKPVEIWEMIRMVATTRIIMPETQVRLSAGRMNMTREGQAMCFFAGANSIFAGDKLLTTPNPDVNEDMKMFEMLGLNPQKPFTKVSQPTTVEAKDSRYESLGEKPKWSRPSHTIEKNLELSGKGKN</sequence>
<organism>
    <name type="scientific">Flavobacterium psychrophilum (strain ATCC 49511 / DSM 21280 / CIP 103535 / JIP02/86)</name>
    <dbReference type="NCBI Taxonomy" id="402612"/>
    <lineage>
        <taxon>Bacteria</taxon>
        <taxon>Pseudomonadati</taxon>
        <taxon>Bacteroidota</taxon>
        <taxon>Flavobacteriia</taxon>
        <taxon>Flavobacteriales</taxon>
        <taxon>Flavobacteriaceae</taxon>
        <taxon>Flavobacterium</taxon>
    </lineage>
</organism>
<accession>A6GW77</accession>
<evidence type="ECO:0000255" key="1">
    <source>
        <dbReference type="HAMAP-Rule" id="MF_01694"/>
    </source>
</evidence>
<evidence type="ECO:0000255" key="2">
    <source>
        <dbReference type="PROSITE-ProRule" id="PRU01266"/>
    </source>
</evidence>
<evidence type="ECO:0000256" key="3">
    <source>
        <dbReference type="SAM" id="MobiDB-lite"/>
    </source>
</evidence>
<comment type="function">
    <text evidence="1">Catalyzes the conversion of dethiobiotin (DTB) to biotin by the insertion of a sulfur atom into dethiobiotin via a radical-based mechanism.</text>
</comment>
<comment type="catalytic activity">
    <reaction evidence="1">
        <text>(4R,5S)-dethiobiotin + (sulfur carrier)-SH + 2 reduced [2Fe-2S]-[ferredoxin] + 2 S-adenosyl-L-methionine = (sulfur carrier)-H + biotin + 2 5'-deoxyadenosine + 2 L-methionine + 2 oxidized [2Fe-2S]-[ferredoxin]</text>
        <dbReference type="Rhea" id="RHEA:22060"/>
        <dbReference type="Rhea" id="RHEA-COMP:10000"/>
        <dbReference type="Rhea" id="RHEA-COMP:10001"/>
        <dbReference type="Rhea" id="RHEA-COMP:14737"/>
        <dbReference type="Rhea" id="RHEA-COMP:14739"/>
        <dbReference type="ChEBI" id="CHEBI:17319"/>
        <dbReference type="ChEBI" id="CHEBI:29917"/>
        <dbReference type="ChEBI" id="CHEBI:33737"/>
        <dbReference type="ChEBI" id="CHEBI:33738"/>
        <dbReference type="ChEBI" id="CHEBI:57586"/>
        <dbReference type="ChEBI" id="CHEBI:57844"/>
        <dbReference type="ChEBI" id="CHEBI:59789"/>
        <dbReference type="ChEBI" id="CHEBI:64428"/>
        <dbReference type="ChEBI" id="CHEBI:149473"/>
        <dbReference type="EC" id="2.8.1.6"/>
    </reaction>
</comment>
<comment type="cofactor">
    <cofactor evidence="1">
        <name>[4Fe-4S] cluster</name>
        <dbReference type="ChEBI" id="CHEBI:49883"/>
    </cofactor>
    <text evidence="1">Binds 1 [4Fe-4S] cluster. The cluster is coordinated with 3 cysteines and an exchangeable S-adenosyl-L-methionine.</text>
</comment>
<comment type="cofactor">
    <cofactor evidence="1">
        <name>[2Fe-2S] cluster</name>
        <dbReference type="ChEBI" id="CHEBI:190135"/>
    </cofactor>
    <text evidence="1">Binds 1 [2Fe-2S] cluster. The cluster is coordinated with 3 cysteines and 1 arginine.</text>
</comment>
<comment type="pathway">
    <text evidence="1">Cofactor biosynthesis; biotin biosynthesis; biotin from 7,8-diaminononanoate: step 2/2.</text>
</comment>
<comment type="subunit">
    <text evidence="1">Homodimer.</text>
</comment>
<comment type="similarity">
    <text evidence="1">Belongs to the radical SAM superfamily. Biotin synthase family.</text>
</comment>
<name>BIOB_FLAPJ</name>